<protein>
    <recommendedName>
        <fullName evidence="1">tRNA uridine(34) hydroxylase</fullName>
        <ecNumber evidence="1">1.14.-.-</ecNumber>
    </recommendedName>
    <alternativeName>
        <fullName evidence="1">tRNA hydroxylation protein O</fullName>
    </alternativeName>
</protein>
<reference key="1">
    <citation type="journal article" date="2005" name="J. Bacteriol.">
        <title>Whole-genome sequencing of Staphylococcus haemolyticus uncovers the extreme plasticity of its genome and the evolution of human-colonizing staphylococcal species.</title>
        <authorList>
            <person name="Takeuchi F."/>
            <person name="Watanabe S."/>
            <person name="Baba T."/>
            <person name="Yuzawa H."/>
            <person name="Ito T."/>
            <person name="Morimoto Y."/>
            <person name="Kuroda M."/>
            <person name="Cui L."/>
            <person name="Takahashi M."/>
            <person name="Ankai A."/>
            <person name="Baba S."/>
            <person name="Fukui S."/>
            <person name="Lee J.C."/>
            <person name="Hiramatsu K."/>
        </authorList>
    </citation>
    <scope>NUCLEOTIDE SEQUENCE [LARGE SCALE GENOMIC DNA]</scope>
    <source>
        <strain>JCSC1435</strain>
    </source>
</reference>
<dbReference type="EC" id="1.14.-.-" evidence="1"/>
<dbReference type="EMBL" id="AP006716">
    <property type="protein sequence ID" value="BAE03608.1"/>
    <property type="molecule type" value="Genomic_DNA"/>
</dbReference>
<dbReference type="RefSeq" id="WP_011274628.1">
    <property type="nucleotide sequence ID" value="NC_007168.1"/>
</dbReference>
<dbReference type="SMR" id="Q4L9R7"/>
<dbReference type="KEGG" id="sha:SH0299"/>
<dbReference type="eggNOG" id="COG1054">
    <property type="taxonomic scope" value="Bacteria"/>
</dbReference>
<dbReference type="HOGENOM" id="CLU_038878_1_0_9"/>
<dbReference type="OrthoDB" id="9778326at2"/>
<dbReference type="Proteomes" id="UP000000543">
    <property type="component" value="Chromosome"/>
</dbReference>
<dbReference type="GO" id="GO:0016705">
    <property type="term" value="F:oxidoreductase activity, acting on paired donors, with incorporation or reduction of molecular oxygen"/>
    <property type="evidence" value="ECO:0007669"/>
    <property type="project" value="UniProtKB-UniRule"/>
</dbReference>
<dbReference type="GO" id="GO:0006400">
    <property type="term" value="P:tRNA modification"/>
    <property type="evidence" value="ECO:0007669"/>
    <property type="project" value="UniProtKB-UniRule"/>
</dbReference>
<dbReference type="CDD" id="cd01518">
    <property type="entry name" value="RHOD_YceA"/>
    <property type="match status" value="1"/>
</dbReference>
<dbReference type="Gene3D" id="3.30.70.100">
    <property type="match status" value="1"/>
</dbReference>
<dbReference type="Gene3D" id="3.40.250.10">
    <property type="entry name" value="Rhodanese-like domain"/>
    <property type="match status" value="1"/>
</dbReference>
<dbReference type="HAMAP" id="MF_00469">
    <property type="entry name" value="TrhO"/>
    <property type="match status" value="1"/>
</dbReference>
<dbReference type="InterPro" id="IPR001763">
    <property type="entry name" value="Rhodanese-like_dom"/>
</dbReference>
<dbReference type="InterPro" id="IPR036873">
    <property type="entry name" value="Rhodanese-like_dom_sf"/>
</dbReference>
<dbReference type="InterPro" id="IPR022111">
    <property type="entry name" value="Rhodanese_C"/>
</dbReference>
<dbReference type="InterPro" id="IPR020936">
    <property type="entry name" value="TrhO"/>
</dbReference>
<dbReference type="InterPro" id="IPR040503">
    <property type="entry name" value="TRHO_N"/>
</dbReference>
<dbReference type="NCBIfam" id="NF001135">
    <property type="entry name" value="PRK00142.1-3"/>
    <property type="match status" value="1"/>
</dbReference>
<dbReference type="PANTHER" id="PTHR43268:SF3">
    <property type="entry name" value="RHODANESE-LIKE DOMAIN-CONTAINING PROTEIN 7-RELATED"/>
    <property type="match status" value="1"/>
</dbReference>
<dbReference type="PANTHER" id="PTHR43268">
    <property type="entry name" value="THIOSULFATE SULFURTRANSFERASE/RHODANESE-LIKE DOMAIN-CONTAINING PROTEIN 2"/>
    <property type="match status" value="1"/>
</dbReference>
<dbReference type="Pfam" id="PF00581">
    <property type="entry name" value="Rhodanese"/>
    <property type="match status" value="1"/>
</dbReference>
<dbReference type="Pfam" id="PF12368">
    <property type="entry name" value="Rhodanese_C"/>
    <property type="match status" value="1"/>
</dbReference>
<dbReference type="Pfam" id="PF17773">
    <property type="entry name" value="UPF0176_N"/>
    <property type="match status" value="1"/>
</dbReference>
<dbReference type="SMART" id="SM00450">
    <property type="entry name" value="RHOD"/>
    <property type="match status" value="1"/>
</dbReference>
<dbReference type="SUPFAM" id="SSF52821">
    <property type="entry name" value="Rhodanese/Cell cycle control phosphatase"/>
    <property type="match status" value="1"/>
</dbReference>
<dbReference type="PROSITE" id="PS50206">
    <property type="entry name" value="RHODANESE_3"/>
    <property type="match status" value="1"/>
</dbReference>
<sequence length="320" mass="37077">MDYRVLLYYKYTTIDDPETFAAEHLEFCKSNNLKGRILVSTEGINGTLSGTKEDTDKYIEHMHSDERFADMTFKIDEAEGHAFKKMHVRPRNEIVALGLEDDVDPRVTTGKYYSPSEFKEALEDEDTVILDARNDYEFDLGHFRGAIRPDITRFRDLPDWIRENKDQLDGKNIVTYCTGGIRCEKFSGWLVKEGFENVGQLHGGIATYGKDPETKGQYWDGKMYVFDERISVDVNQVEKTVIGKEHFDGTPCERYINCSNPECNKQILVSEENEDKYLGACSYDCAKHERNRYVAKNNISDEEWNRRLENFKDVPEHAHA</sequence>
<comment type="function">
    <text evidence="1">Catalyzes oxygen-dependent 5-hydroxyuridine (ho5U) modification at position 34 in tRNAs.</text>
</comment>
<comment type="catalytic activity">
    <reaction evidence="1">
        <text>uridine(34) in tRNA + AH2 + O2 = 5-hydroxyuridine(34) in tRNA + A + H2O</text>
        <dbReference type="Rhea" id="RHEA:64224"/>
        <dbReference type="Rhea" id="RHEA-COMP:11727"/>
        <dbReference type="Rhea" id="RHEA-COMP:13381"/>
        <dbReference type="ChEBI" id="CHEBI:13193"/>
        <dbReference type="ChEBI" id="CHEBI:15377"/>
        <dbReference type="ChEBI" id="CHEBI:15379"/>
        <dbReference type="ChEBI" id="CHEBI:17499"/>
        <dbReference type="ChEBI" id="CHEBI:65315"/>
        <dbReference type="ChEBI" id="CHEBI:136877"/>
    </reaction>
</comment>
<comment type="similarity">
    <text evidence="1">Belongs to the TrhO family.</text>
</comment>
<feature type="chain" id="PRO_0000242947" description="tRNA uridine(34) hydroxylase">
    <location>
        <begin position="1"/>
        <end position="320"/>
    </location>
</feature>
<feature type="domain" description="Rhodanese" evidence="1">
    <location>
        <begin position="123"/>
        <end position="217"/>
    </location>
</feature>
<feature type="active site" description="Cysteine persulfide intermediate" evidence="1">
    <location>
        <position position="177"/>
    </location>
</feature>
<accession>Q4L9R7</accession>
<keyword id="KW-0560">Oxidoreductase</keyword>
<keyword id="KW-0819">tRNA processing</keyword>
<organism>
    <name type="scientific">Staphylococcus haemolyticus (strain JCSC1435)</name>
    <dbReference type="NCBI Taxonomy" id="279808"/>
    <lineage>
        <taxon>Bacteria</taxon>
        <taxon>Bacillati</taxon>
        <taxon>Bacillota</taxon>
        <taxon>Bacilli</taxon>
        <taxon>Bacillales</taxon>
        <taxon>Staphylococcaceae</taxon>
        <taxon>Staphylococcus</taxon>
    </lineage>
</organism>
<name>TRHO_STAHJ</name>
<proteinExistence type="inferred from homology"/>
<evidence type="ECO:0000255" key="1">
    <source>
        <dbReference type="HAMAP-Rule" id="MF_00469"/>
    </source>
</evidence>
<gene>
    <name evidence="1" type="primary">trhO</name>
    <name type="ordered locus">SH0299</name>
</gene>